<dbReference type="EMBL" id="AK292245">
    <property type="protein sequence ID" value="BAF84934.1"/>
    <property type="molecule type" value="mRNA"/>
</dbReference>
<dbReference type="EMBL" id="AL158150">
    <property type="status" value="NOT_ANNOTATED_CDS"/>
    <property type="molecule type" value="Genomic_DNA"/>
</dbReference>
<dbReference type="EMBL" id="AL356000">
    <property type="status" value="NOT_ANNOTATED_CDS"/>
    <property type="molecule type" value="Genomic_DNA"/>
</dbReference>
<dbReference type="EMBL" id="CH471071">
    <property type="protein sequence ID" value="EAW58654.1"/>
    <property type="molecule type" value="Genomic_DNA"/>
</dbReference>
<dbReference type="EMBL" id="BC033489">
    <property type="protein sequence ID" value="AAH33489.1"/>
    <property type="molecule type" value="mRNA"/>
</dbReference>
<dbReference type="CCDS" id="CCDS6487.1"/>
<dbReference type="RefSeq" id="NP_001273978.1">
    <property type="nucleotide sequence ID" value="NM_001287049.1"/>
</dbReference>
<dbReference type="RefSeq" id="NP_001273979.1">
    <property type="nucleotide sequence ID" value="NM_001287050.1"/>
</dbReference>
<dbReference type="RefSeq" id="NP_714918.2">
    <property type="nucleotide sequence ID" value="NM_153707.4"/>
</dbReference>
<dbReference type="SMR" id="Q8IYX7"/>
<dbReference type="BioGRID" id="127666">
    <property type="interactions" value="53"/>
</dbReference>
<dbReference type="FunCoup" id="Q8IYX7">
    <property type="interactions" value="94"/>
</dbReference>
<dbReference type="IntAct" id="Q8IYX7">
    <property type="interactions" value="49"/>
</dbReference>
<dbReference type="STRING" id="9606.ENSP00000369907"/>
<dbReference type="GlyGen" id="Q8IYX7">
    <property type="glycosylation" value="1 site, 1 O-linked glycan (1 site)"/>
</dbReference>
<dbReference type="iPTMnet" id="Q8IYX7"/>
<dbReference type="PhosphoSitePlus" id="Q8IYX7"/>
<dbReference type="BioMuta" id="SAXO1"/>
<dbReference type="DMDM" id="73620045"/>
<dbReference type="MassIVE" id="Q8IYX7"/>
<dbReference type="PaxDb" id="9606-ENSP00000369907"/>
<dbReference type="PeptideAtlas" id="Q8IYX7"/>
<dbReference type="ProteomicsDB" id="71259"/>
<dbReference type="Antibodypedia" id="10233">
    <property type="antibodies" value="42 antibodies from 14 providers"/>
</dbReference>
<dbReference type="DNASU" id="158297"/>
<dbReference type="Ensembl" id="ENST00000380534.9">
    <property type="protein sequence ID" value="ENSP00000369907.4"/>
    <property type="gene ID" value="ENSG00000155875.15"/>
</dbReference>
<dbReference type="GeneID" id="158297"/>
<dbReference type="KEGG" id="hsa:158297"/>
<dbReference type="MANE-Select" id="ENST00000380534.9">
    <property type="protein sequence ID" value="ENSP00000369907.4"/>
    <property type="RefSeq nucleotide sequence ID" value="NM_153707.4"/>
    <property type="RefSeq protein sequence ID" value="NP_714918.2"/>
</dbReference>
<dbReference type="UCSC" id="uc003zni.4">
    <property type="organism name" value="human"/>
</dbReference>
<dbReference type="AGR" id="HGNC:28566"/>
<dbReference type="CTD" id="158297"/>
<dbReference type="DisGeNET" id="158297"/>
<dbReference type="GeneCards" id="SAXO1"/>
<dbReference type="HGNC" id="HGNC:28566">
    <property type="gene designation" value="SAXO1"/>
</dbReference>
<dbReference type="HPA" id="ENSG00000155875">
    <property type="expression patterns" value="Tissue enriched (testis)"/>
</dbReference>
<dbReference type="MIM" id="616292">
    <property type="type" value="gene"/>
</dbReference>
<dbReference type="neXtProt" id="NX_Q8IYX7"/>
<dbReference type="OpenTargets" id="ENSG00000155875"/>
<dbReference type="PharmGKB" id="PA162386652"/>
<dbReference type="VEuPathDB" id="HostDB:ENSG00000155875"/>
<dbReference type="eggNOG" id="ENOG502QWHB">
    <property type="taxonomic scope" value="Eukaryota"/>
</dbReference>
<dbReference type="GeneTree" id="ENSGT00390000007252"/>
<dbReference type="HOGENOM" id="CLU_047658_0_0_1"/>
<dbReference type="InParanoid" id="Q8IYX7"/>
<dbReference type="OMA" id="KQPVPME"/>
<dbReference type="OrthoDB" id="365640at2759"/>
<dbReference type="PAN-GO" id="Q8IYX7">
    <property type="GO annotations" value="6 GO annotations based on evolutionary models"/>
</dbReference>
<dbReference type="PhylomeDB" id="Q8IYX7"/>
<dbReference type="TreeFam" id="TF319394"/>
<dbReference type="PathwayCommons" id="Q8IYX7"/>
<dbReference type="SignaLink" id="Q8IYX7"/>
<dbReference type="BioGRID-ORCS" id="158297">
    <property type="hits" value="14 hits in 1148 CRISPR screens"/>
</dbReference>
<dbReference type="ChiTaRS" id="SAXO1">
    <property type="organism name" value="human"/>
</dbReference>
<dbReference type="GenomeRNAi" id="158297"/>
<dbReference type="Pharos" id="Q8IYX7">
    <property type="development level" value="Tbio"/>
</dbReference>
<dbReference type="PRO" id="PR:Q8IYX7"/>
<dbReference type="Proteomes" id="UP000005640">
    <property type="component" value="Chromosome 9"/>
</dbReference>
<dbReference type="RNAct" id="Q8IYX7">
    <property type="molecule type" value="protein"/>
</dbReference>
<dbReference type="Bgee" id="ENSG00000155875">
    <property type="expression patterns" value="Expressed in secondary oocyte and 41 other cell types or tissues"/>
</dbReference>
<dbReference type="ExpressionAtlas" id="Q8IYX7">
    <property type="expression patterns" value="baseline and differential"/>
</dbReference>
<dbReference type="GO" id="GO:0005879">
    <property type="term" value="C:axonemal microtubule"/>
    <property type="evidence" value="ECO:0000314"/>
    <property type="project" value="UniProtKB"/>
</dbReference>
<dbReference type="GO" id="GO:0005814">
    <property type="term" value="C:centriole"/>
    <property type="evidence" value="ECO:0000314"/>
    <property type="project" value="UniProtKB"/>
</dbReference>
<dbReference type="GO" id="GO:0005813">
    <property type="term" value="C:centrosome"/>
    <property type="evidence" value="ECO:0007669"/>
    <property type="project" value="UniProtKB-SubCell"/>
</dbReference>
<dbReference type="GO" id="GO:0036064">
    <property type="term" value="C:ciliary basal body"/>
    <property type="evidence" value="ECO:0000314"/>
    <property type="project" value="UniProtKB"/>
</dbReference>
<dbReference type="GO" id="GO:0005856">
    <property type="term" value="C:cytoskeleton"/>
    <property type="evidence" value="ECO:0000318"/>
    <property type="project" value="GO_Central"/>
</dbReference>
<dbReference type="GO" id="GO:0031514">
    <property type="term" value="C:motile cilium"/>
    <property type="evidence" value="ECO:0000314"/>
    <property type="project" value="UniProtKB"/>
</dbReference>
<dbReference type="GO" id="GO:0036126">
    <property type="term" value="C:sperm flagellum"/>
    <property type="evidence" value="ECO:0000314"/>
    <property type="project" value="UniProtKB"/>
</dbReference>
<dbReference type="GO" id="GO:0008017">
    <property type="term" value="F:microtubule binding"/>
    <property type="evidence" value="ECO:0000314"/>
    <property type="project" value="UniProtKB"/>
</dbReference>
<dbReference type="GO" id="GO:0030030">
    <property type="term" value="P:cell projection organization"/>
    <property type="evidence" value="ECO:0007669"/>
    <property type="project" value="UniProtKB-KW"/>
</dbReference>
<dbReference type="GO" id="GO:0070417">
    <property type="term" value="P:cellular response to cold"/>
    <property type="evidence" value="ECO:0000314"/>
    <property type="project" value="UniProtKB"/>
</dbReference>
<dbReference type="GO" id="GO:0009631">
    <property type="term" value="P:cold acclimation"/>
    <property type="evidence" value="ECO:0000314"/>
    <property type="project" value="UniProtKB"/>
</dbReference>
<dbReference type="GO" id="GO:0045724">
    <property type="term" value="P:positive regulation of cilium assembly"/>
    <property type="evidence" value="ECO:0000315"/>
    <property type="project" value="UniProtKB"/>
</dbReference>
<dbReference type="GO" id="GO:0050821">
    <property type="term" value="P:protein stabilization"/>
    <property type="evidence" value="ECO:0000314"/>
    <property type="project" value="UniProtKB"/>
</dbReference>
<dbReference type="InterPro" id="IPR033336">
    <property type="entry name" value="SAXO1/2"/>
</dbReference>
<dbReference type="PANTHER" id="PTHR31516:SF9">
    <property type="entry name" value="STABILIZER OF AXONEMAL MICROTUBULES 1"/>
    <property type="match status" value="1"/>
</dbReference>
<dbReference type="PANTHER" id="PTHR31516">
    <property type="entry name" value="STABILIZER OF AXONEMAL MICROTUBULES 2"/>
    <property type="match status" value="1"/>
</dbReference>
<dbReference type="Pfam" id="PF05217">
    <property type="entry name" value="SAXO1-2"/>
    <property type="match status" value="1"/>
</dbReference>
<organism>
    <name type="scientific">Homo sapiens</name>
    <name type="common">Human</name>
    <dbReference type="NCBI Taxonomy" id="9606"/>
    <lineage>
        <taxon>Eukaryota</taxon>
        <taxon>Metazoa</taxon>
        <taxon>Chordata</taxon>
        <taxon>Craniata</taxon>
        <taxon>Vertebrata</taxon>
        <taxon>Euteleostomi</taxon>
        <taxon>Mammalia</taxon>
        <taxon>Eutheria</taxon>
        <taxon>Euarchontoglires</taxon>
        <taxon>Primates</taxon>
        <taxon>Haplorrhini</taxon>
        <taxon>Catarrhini</taxon>
        <taxon>Hominidae</taxon>
        <taxon>Homo</taxon>
    </lineage>
</organism>
<reference key="1">
    <citation type="journal article" date="2004" name="Nat. Genet.">
        <title>Complete sequencing and characterization of 21,243 full-length human cDNAs.</title>
        <authorList>
            <person name="Ota T."/>
            <person name="Suzuki Y."/>
            <person name="Nishikawa T."/>
            <person name="Otsuki T."/>
            <person name="Sugiyama T."/>
            <person name="Irie R."/>
            <person name="Wakamatsu A."/>
            <person name="Hayashi K."/>
            <person name="Sato H."/>
            <person name="Nagai K."/>
            <person name="Kimura K."/>
            <person name="Makita H."/>
            <person name="Sekine M."/>
            <person name="Obayashi M."/>
            <person name="Nishi T."/>
            <person name="Shibahara T."/>
            <person name="Tanaka T."/>
            <person name="Ishii S."/>
            <person name="Yamamoto J."/>
            <person name="Saito K."/>
            <person name="Kawai Y."/>
            <person name="Isono Y."/>
            <person name="Nakamura Y."/>
            <person name="Nagahari K."/>
            <person name="Murakami K."/>
            <person name="Yasuda T."/>
            <person name="Iwayanagi T."/>
            <person name="Wagatsuma M."/>
            <person name="Shiratori A."/>
            <person name="Sudo H."/>
            <person name="Hosoiri T."/>
            <person name="Kaku Y."/>
            <person name="Kodaira H."/>
            <person name="Kondo H."/>
            <person name="Sugawara M."/>
            <person name="Takahashi M."/>
            <person name="Kanda K."/>
            <person name="Yokoi T."/>
            <person name="Furuya T."/>
            <person name="Kikkawa E."/>
            <person name="Omura Y."/>
            <person name="Abe K."/>
            <person name="Kamihara K."/>
            <person name="Katsuta N."/>
            <person name="Sato K."/>
            <person name="Tanikawa M."/>
            <person name="Yamazaki M."/>
            <person name="Ninomiya K."/>
            <person name="Ishibashi T."/>
            <person name="Yamashita H."/>
            <person name="Murakawa K."/>
            <person name="Fujimori K."/>
            <person name="Tanai H."/>
            <person name="Kimata M."/>
            <person name="Watanabe M."/>
            <person name="Hiraoka S."/>
            <person name="Chiba Y."/>
            <person name="Ishida S."/>
            <person name="Ono Y."/>
            <person name="Takiguchi S."/>
            <person name="Watanabe S."/>
            <person name="Yosida M."/>
            <person name="Hotuta T."/>
            <person name="Kusano J."/>
            <person name="Kanehori K."/>
            <person name="Takahashi-Fujii A."/>
            <person name="Hara H."/>
            <person name="Tanase T.-O."/>
            <person name="Nomura Y."/>
            <person name="Togiya S."/>
            <person name="Komai F."/>
            <person name="Hara R."/>
            <person name="Takeuchi K."/>
            <person name="Arita M."/>
            <person name="Imose N."/>
            <person name="Musashino K."/>
            <person name="Yuuki H."/>
            <person name="Oshima A."/>
            <person name="Sasaki N."/>
            <person name="Aotsuka S."/>
            <person name="Yoshikawa Y."/>
            <person name="Matsunawa H."/>
            <person name="Ichihara T."/>
            <person name="Shiohata N."/>
            <person name="Sano S."/>
            <person name="Moriya S."/>
            <person name="Momiyama H."/>
            <person name="Satoh N."/>
            <person name="Takami S."/>
            <person name="Terashima Y."/>
            <person name="Suzuki O."/>
            <person name="Nakagawa S."/>
            <person name="Senoh A."/>
            <person name="Mizoguchi H."/>
            <person name="Goto Y."/>
            <person name="Shimizu F."/>
            <person name="Wakebe H."/>
            <person name="Hishigaki H."/>
            <person name="Watanabe T."/>
            <person name="Sugiyama A."/>
            <person name="Takemoto M."/>
            <person name="Kawakami B."/>
            <person name="Yamazaki M."/>
            <person name="Watanabe K."/>
            <person name="Kumagai A."/>
            <person name="Itakura S."/>
            <person name="Fukuzumi Y."/>
            <person name="Fujimori Y."/>
            <person name="Komiyama M."/>
            <person name="Tashiro H."/>
            <person name="Tanigami A."/>
            <person name="Fujiwara T."/>
            <person name="Ono T."/>
            <person name="Yamada K."/>
            <person name="Fujii Y."/>
            <person name="Ozaki K."/>
            <person name="Hirao M."/>
            <person name="Ohmori Y."/>
            <person name="Kawabata A."/>
            <person name="Hikiji T."/>
            <person name="Kobatake N."/>
            <person name="Inagaki H."/>
            <person name="Ikema Y."/>
            <person name="Okamoto S."/>
            <person name="Okitani R."/>
            <person name="Kawakami T."/>
            <person name="Noguchi S."/>
            <person name="Itoh T."/>
            <person name="Shigeta K."/>
            <person name="Senba T."/>
            <person name="Matsumura K."/>
            <person name="Nakajima Y."/>
            <person name="Mizuno T."/>
            <person name="Morinaga M."/>
            <person name="Sasaki M."/>
            <person name="Togashi T."/>
            <person name="Oyama M."/>
            <person name="Hata H."/>
            <person name="Watanabe M."/>
            <person name="Komatsu T."/>
            <person name="Mizushima-Sugano J."/>
            <person name="Satoh T."/>
            <person name="Shirai Y."/>
            <person name="Takahashi Y."/>
            <person name="Nakagawa K."/>
            <person name="Okumura K."/>
            <person name="Nagase T."/>
            <person name="Nomura N."/>
            <person name="Kikuchi H."/>
            <person name="Masuho Y."/>
            <person name="Yamashita R."/>
            <person name="Nakai K."/>
            <person name="Yada T."/>
            <person name="Nakamura Y."/>
            <person name="Ohara O."/>
            <person name="Isogai T."/>
            <person name="Sugano S."/>
        </authorList>
    </citation>
    <scope>NUCLEOTIDE SEQUENCE [LARGE SCALE MRNA]</scope>
    <scope>VARIANTS GLU-27 AND SER-63</scope>
    <source>
        <tissue>Testis</tissue>
    </source>
</reference>
<reference key="2">
    <citation type="journal article" date="2004" name="Nature">
        <title>DNA sequence and analysis of human chromosome 9.</title>
        <authorList>
            <person name="Humphray S.J."/>
            <person name="Oliver K."/>
            <person name="Hunt A.R."/>
            <person name="Plumb R.W."/>
            <person name="Loveland J.E."/>
            <person name="Howe K.L."/>
            <person name="Andrews T.D."/>
            <person name="Searle S."/>
            <person name="Hunt S.E."/>
            <person name="Scott C.E."/>
            <person name="Jones M.C."/>
            <person name="Ainscough R."/>
            <person name="Almeida J.P."/>
            <person name="Ambrose K.D."/>
            <person name="Ashwell R.I.S."/>
            <person name="Babbage A.K."/>
            <person name="Babbage S."/>
            <person name="Bagguley C.L."/>
            <person name="Bailey J."/>
            <person name="Banerjee R."/>
            <person name="Barker D.J."/>
            <person name="Barlow K.F."/>
            <person name="Bates K."/>
            <person name="Beasley H."/>
            <person name="Beasley O."/>
            <person name="Bird C.P."/>
            <person name="Bray-Allen S."/>
            <person name="Brown A.J."/>
            <person name="Brown J.Y."/>
            <person name="Burford D."/>
            <person name="Burrill W."/>
            <person name="Burton J."/>
            <person name="Carder C."/>
            <person name="Carter N.P."/>
            <person name="Chapman J.C."/>
            <person name="Chen Y."/>
            <person name="Clarke G."/>
            <person name="Clark S.Y."/>
            <person name="Clee C.M."/>
            <person name="Clegg S."/>
            <person name="Collier R.E."/>
            <person name="Corby N."/>
            <person name="Crosier M."/>
            <person name="Cummings A.T."/>
            <person name="Davies J."/>
            <person name="Dhami P."/>
            <person name="Dunn M."/>
            <person name="Dutta I."/>
            <person name="Dyer L.W."/>
            <person name="Earthrowl M.E."/>
            <person name="Faulkner L."/>
            <person name="Fleming C.J."/>
            <person name="Frankish A."/>
            <person name="Frankland J.A."/>
            <person name="French L."/>
            <person name="Fricker D.G."/>
            <person name="Garner P."/>
            <person name="Garnett J."/>
            <person name="Ghori J."/>
            <person name="Gilbert J.G.R."/>
            <person name="Glison C."/>
            <person name="Grafham D.V."/>
            <person name="Gribble S."/>
            <person name="Griffiths C."/>
            <person name="Griffiths-Jones S."/>
            <person name="Grocock R."/>
            <person name="Guy J."/>
            <person name="Hall R.E."/>
            <person name="Hammond S."/>
            <person name="Harley J.L."/>
            <person name="Harrison E.S.I."/>
            <person name="Hart E.A."/>
            <person name="Heath P.D."/>
            <person name="Henderson C.D."/>
            <person name="Hopkins B.L."/>
            <person name="Howard P.J."/>
            <person name="Howden P.J."/>
            <person name="Huckle E."/>
            <person name="Johnson C."/>
            <person name="Johnson D."/>
            <person name="Joy A.A."/>
            <person name="Kay M."/>
            <person name="Keenan S."/>
            <person name="Kershaw J.K."/>
            <person name="Kimberley A.M."/>
            <person name="King A."/>
            <person name="Knights A."/>
            <person name="Laird G.K."/>
            <person name="Langford C."/>
            <person name="Lawlor S."/>
            <person name="Leongamornlert D.A."/>
            <person name="Leversha M."/>
            <person name="Lloyd C."/>
            <person name="Lloyd D.M."/>
            <person name="Lovell J."/>
            <person name="Martin S."/>
            <person name="Mashreghi-Mohammadi M."/>
            <person name="Matthews L."/>
            <person name="McLaren S."/>
            <person name="McLay K.E."/>
            <person name="McMurray A."/>
            <person name="Milne S."/>
            <person name="Nickerson T."/>
            <person name="Nisbett J."/>
            <person name="Nordsiek G."/>
            <person name="Pearce A.V."/>
            <person name="Peck A.I."/>
            <person name="Porter K.M."/>
            <person name="Pandian R."/>
            <person name="Pelan S."/>
            <person name="Phillimore B."/>
            <person name="Povey S."/>
            <person name="Ramsey Y."/>
            <person name="Rand V."/>
            <person name="Scharfe M."/>
            <person name="Sehra H.K."/>
            <person name="Shownkeen R."/>
            <person name="Sims S.K."/>
            <person name="Skuce C.D."/>
            <person name="Smith M."/>
            <person name="Steward C.A."/>
            <person name="Swarbreck D."/>
            <person name="Sycamore N."/>
            <person name="Tester J."/>
            <person name="Thorpe A."/>
            <person name="Tracey A."/>
            <person name="Tromans A."/>
            <person name="Thomas D.W."/>
            <person name="Wall M."/>
            <person name="Wallis J.M."/>
            <person name="West A.P."/>
            <person name="Whitehead S.L."/>
            <person name="Willey D.L."/>
            <person name="Williams S.A."/>
            <person name="Wilming L."/>
            <person name="Wray P.W."/>
            <person name="Young L."/>
            <person name="Ashurst J.L."/>
            <person name="Coulson A."/>
            <person name="Blocker H."/>
            <person name="Durbin R.M."/>
            <person name="Sulston J.E."/>
            <person name="Hubbard T."/>
            <person name="Jackson M.J."/>
            <person name="Bentley D.R."/>
            <person name="Beck S."/>
            <person name="Rogers J."/>
            <person name="Dunham I."/>
        </authorList>
    </citation>
    <scope>NUCLEOTIDE SEQUENCE [LARGE SCALE GENOMIC DNA]</scope>
</reference>
<reference key="3">
    <citation type="submission" date="2005-09" db="EMBL/GenBank/DDBJ databases">
        <authorList>
            <person name="Mural R.J."/>
            <person name="Istrail S."/>
            <person name="Sutton G.G."/>
            <person name="Florea L."/>
            <person name="Halpern A.L."/>
            <person name="Mobarry C.M."/>
            <person name="Lippert R."/>
            <person name="Walenz B."/>
            <person name="Shatkay H."/>
            <person name="Dew I."/>
            <person name="Miller J.R."/>
            <person name="Flanigan M.J."/>
            <person name="Edwards N.J."/>
            <person name="Bolanos R."/>
            <person name="Fasulo D."/>
            <person name="Halldorsson B.V."/>
            <person name="Hannenhalli S."/>
            <person name="Turner R."/>
            <person name="Yooseph S."/>
            <person name="Lu F."/>
            <person name="Nusskern D.R."/>
            <person name="Shue B.C."/>
            <person name="Zheng X.H."/>
            <person name="Zhong F."/>
            <person name="Delcher A.L."/>
            <person name="Huson D.H."/>
            <person name="Kravitz S.A."/>
            <person name="Mouchard L."/>
            <person name="Reinert K."/>
            <person name="Remington K.A."/>
            <person name="Clark A.G."/>
            <person name="Waterman M.S."/>
            <person name="Eichler E.E."/>
            <person name="Adams M.D."/>
            <person name="Hunkapiller M.W."/>
            <person name="Myers E.W."/>
            <person name="Venter J.C."/>
        </authorList>
    </citation>
    <scope>NUCLEOTIDE SEQUENCE [LARGE SCALE GENOMIC DNA]</scope>
    <scope>VARIANTS GLU-27 AND SER-63</scope>
</reference>
<reference key="4">
    <citation type="journal article" date="2004" name="Genome Res.">
        <title>The status, quality, and expansion of the NIH full-length cDNA project: the Mammalian Gene Collection (MGC).</title>
        <authorList>
            <consortium name="The MGC Project Team"/>
        </authorList>
    </citation>
    <scope>NUCLEOTIDE SEQUENCE [LARGE SCALE MRNA]</scope>
    <scope>VARIANTS GLU-27 AND SER-63</scope>
    <source>
        <tissue>Brain</tissue>
    </source>
</reference>
<reference key="5">
    <citation type="journal article" date="2015" name="J. Cell Sci.">
        <title>Human FAM154A (SAXO1) is a microtubule-stabilizing protein specific to cilia and related structures.</title>
        <authorList>
            <person name="Dacheux D."/>
            <person name="Roger B."/>
            <person name="Bosc C."/>
            <person name="Landrein N."/>
            <person name="Roche E."/>
            <person name="Chansel L."/>
            <person name="Trian T."/>
            <person name="Andrieux A."/>
            <person name="Papaxanthos-Roche A."/>
            <person name="Marthan R."/>
            <person name="Robinson D.R."/>
            <person name="Bonhivers M."/>
        </authorList>
    </citation>
    <scope>FUNCTION</scope>
    <scope>ASSOCIATION WITH MICROTUBULES</scope>
    <scope>SUBUNIT</scope>
    <scope>SUBCELLULAR LOCATION</scope>
    <scope>TISSUE SPECIFICITY</scope>
    <scope>DEVELOPMENTAL STAGE</scope>
    <scope>MUTAGENESIS OF 116-ARG--PRO-119</scope>
</reference>
<keyword id="KW-0966">Cell projection</keyword>
<keyword id="KW-0969">Cilium</keyword>
<keyword id="KW-0970">Cilium biogenesis/degradation</keyword>
<keyword id="KW-0963">Cytoplasm</keyword>
<keyword id="KW-0206">Cytoskeleton</keyword>
<keyword id="KW-0282">Flagellum</keyword>
<keyword id="KW-1267">Proteomics identification</keyword>
<keyword id="KW-1185">Reference proteome</keyword>
<keyword id="KW-0677">Repeat</keyword>
<sequence length="474" mass="54621">MKTKCICELCSCGRHHCPHLPTKIYDKTEKPCLLSEYTENYPFYHSYLPRESFKPRREYQKGPIPMEGLTTSRRDFGPHKVAPVKVHQYDQFVPSEENMDLLTTYKKDYNPYPVCRVDPIKPRDSKYPCSDKMECLPTYKADYLPWNQPRREPLRLEHKYQPASVRFDNRTTHQDDYPIKGLVKTISCKPLAMPKLCNIPLEDVTNYKMSYVAHPVEKRFVHEAEKFRPCEIPFESLTTQKQSYRGLMGEPAKSLKPLARPPGLDMPFCNTTEFRDKYQAWPMPRMFSKAPITYVPPEDRMDLLTTVQAHYTCPKGAPAQSCRPALQIKKCGRFEGSSTTKDDYKQWSSMRTEPVKPVPQLDLPTEPLDCLTTTRAHYVPHLPINTKSCKPHWSGPRGNVPVESQTTYTISFTPKEMGRCLASYPEPPGYTFEEVDALGHRIYKPVSQAGSQQSSHLSVDDSENPNQRELEVLA</sequence>
<name>SAXO1_HUMAN</name>
<accession>Q8IYX7</accession>
<accession>A8K880</accession>
<accession>Q5VY58</accession>
<proteinExistence type="evidence at protein level"/>
<protein>
    <recommendedName>
        <fullName evidence="4">Stabilizer of axonemal microtubules 1</fullName>
    </recommendedName>
</protein>
<gene>
    <name type="primary">SAXO1</name>
    <name type="synonym">C9orf138</name>
    <name type="synonym">FAM154A</name>
</gene>
<feature type="chain" id="PRO_0000089737" description="Stabilizer of axonemal microtubules 1">
    <location>
        <begin position="1"/>
        <end position="474"/>
    </location>
</feature>
<feature type="region of interest" description="Mn 1">
    <location>
        <begin position="30"/>
        <end position="64"/>
    </location>
</feature>
<feature type="region of interest" description="Mn 2">
    <location>
        <begin position="65"/>
        <end position="97"/>
    </location>
</feature>
<feature type="region of interest" description="Mn 3">
    <location>
        <begin position="98"/>
        <end position="131"/>
    </location>
</feature>
<feature type="region of interest" description="Mn 4">
    <location>
        <begin position="132"/>
        <end position="165"/>
    </location>
</feature>
<feature type="region of interest" description="Mn 5">
    <location>
        <begin position="166"/>
        <end position="199"/>
    </location>
</feature>
<feature type="region of interest" description="Mn 6">
    <location>
        <begin position="200"/>
        <end position="232"/>
    </location>
</feature>
<feature type="region of interest" description="Mn 7">
    <location>
        <begin position="233"/>
        <end position="266"/>
    </location>
</feature>
<feature type="region of interest" description="Mn 8">
    <location>
        <begin position="267"/>
        <end position="299"/>
    </location>
</feature>
<feature type="region of interest" description="Mn 9">
    <location>
        <begin position="300"/>
        <end position="332"/>
    </location>
</feature>
<feature type="region of interest" description="Mn 10">
    <location>
        <begin position="333"/>
        <end position="366"/>
    </location>
</feature>
<feature type="region of interest" description="Mn 12">
    <location>
        <begin position="367"/>
        <end position="400"/>
    </location>
</feature>
<feature type="region of interest" description="Mn 12">
    <location>
        <begin position="401"/>
        <end position="434"/>
    </location>
</feature>
<feature type="region of interest" description="Disordered" evidence="1">
    <location>
        <begin position="446"/>
        <end position="474"/>
    </location>
</feature>
<feature type="compositionally biased region" description="Polar residues" evidence="1">
    <location>
        <begin position="448"/>
        <end position="457"/>
    </location>
</feature>
<feature type="sequence variant" id="VAR_023229" description="In dbSNP:rs7021572." evidence="2">
    <original>K</original>
    <variation>E</variation>
    <location>
        <position position="27"/>
    </location>
</feature>
<feature type="sequence variant" id="VAR_023230" description="In dbSNP:rs6475273." evidence="2">
    <original>P</original>
    <variation>S</variation>
    <location>
        <position position="63"/>
    </location>
</feature>
<feature type="sequence variant" id="VAR_057807" description="In dbSNP:rs34119945.">
    <original>N</original>
    <variation>S</variation>
    <location>
        <position position="385"/>
    </location>
</feature>
<feature type="mutagenesis site" description="No effect on subcellular location." evidence="3">
    <original>RVDP</original>
    <variation>AADA</variation>
    <location>
        <begin position="116"/>
        <end position="119"/>
    </location>
</feature>
<comment type="function">
    <text evidence="3">May play a role in the regulation of cilium length. Stabilizes microtubules at low temperature.</text>
</comment>
<comment type="subunit">
    <text evidence="3">Associates with microtubules via the Mn regions.</text>
</comment>
<comment type="interaction">
    <interactant intactId="EBI-3957636">
        <id>Q8IYX7</id>
    </interactant>
    <interactant intactId="EBI-11976299">
        <id>Q5BKX5-3</id>
        <label>ACTMAP</label>
    </interactant>
    <organismsDiffer>false</organismsDiffer>
    <experiments>3</experiments>
</comment>
<comment type="interaction">
    <interactant intactId="EBI-3957636">
        <id>Q8IYX7</id>
    </interactant>
    <interactant intactId="EBI-77797">
        <id>P35609</id>
        <label>ACTN2</label>
    </interactant>
    <organismsDiffer>false</organismsDiffer>
    <experiments>7</experiments>
</comment>
<comment type="interaction">
    <interactant intactId="EBI-3957636">
        <id>Q8IYX7</id>
    </interactant>
    <interactant intactId="EBI-357530">
        <id>Q9ULX6</id>
        <label>AKAP8L</label>
    </interactant>
    <organismsDiffer>false</organismsDiffer>
    <experiments>3</experiments>
</comment>
<comment type="interaction">
    <interactant intactId="EBI-3957636">
        <id>Q8IYX7</id>
    </interactant>
    <interactant intactId="EBI-742909">
        <id>Q9H6L4</id>
        <label>ARMC7</label>
    </interactant>
    <organismsDiffer>false</organismsDiffer>
    <experiments>3</experiments>
</comment>
<comment type="interaction">
    <interactant intactId="EBI-3957636">
        <id>Q8IYX7</id>
    </interactant>
    <interactant intactId="EBI-2949658">
        <id>O95429</id>
        <label>BAG4</label>
    </interactant>
    <organismsDiffer>false</organismsDiffer>
    <experiments>3</experiments>
</comment>
<comment type="interaction">
    <interactant intactId="EBI-3957636">
        <id>Q8IYX7</id>
    </interactant>
    <interactant intactId="EBI-742722">
        <id>Q9BUH8</id>
        <label>BEGAIN</label>
    </interactant>
    <organismsDiffer>false</organismsDiffer>
    <experiments>3</experiments>
</comment>
<comment type="interaction">
    <interactant intactId="EBI-3957636">
        <id>Q8IYX7</id>
    </interactant>
    <interactant intactId="EBI-11530605">
        <id>Q9H257-2</id>
        <label>CARD9</label>
    </interactant>
    <organismsDiffer>false</organismsDiffer>
    <experiments>3</experiments>
</comment>
<comment type="interaction">
    <interactant intactId="EBI-3957636">
        <id>Q8IYX7</id>
    </interactant>
    <interactant intactId="EBI-745859">
        <id>P55273</id>
        <label>CDKN2D</label>
    </interactant>
    <organismsDiffer>false</organismsDiffer>
    <experiments>3</experiments>
</comment>
<comment type="interaction">
    <interactant intactId="EBI-3957636">
        <id>Q8IYX7</id>
    </interactant>
    <interactant intactId="EBI-749051">
        <id>Q8IYR0</id>
        <label>CFAP206</label>
    </interactant>
    <organismsDiffer>false</organismsDiffer>
    <experiments>3</experiments>
</comment>
<comment type="interaction">
    <interactant intactId="EBI-3957636">
        <id>Q8IYX7</id>
    </interactant>
    <interactant intactId="EBI-2555370">
        <id>Q8IWX8</id>
        <label>CHERP</label>
    </interactant>
    <organismsDiffer>false</organismsDiffer>
    <experiments>3</experiments>
</comment>
<comment type="interaction">
    <interactant intactId="EBI-3957636">
        <id>Q8IYX7</id>
    </interactant>
    <interactant intactId="EBI-12012272">
        <id>Q9UBL6-2</id>
        <label>CPNE7</label>
    </interactant>
    <organismsDiffer>false</organismsDiffer>
    <experiments>3</experiments>
</comment>
<comment type="interaction">
    <interactant intactId="EBI-3957636">
        <id>Q8IYX7</id>
    </interactant>
    <interactant intactId="EBI-886">
        <id>P46108</id>
        <label>CRK</label>
    </interactant>
    <organismsDiffer>false</organismsDiffer>
    <experiments>3</experiments>
</comment>
<comment type="interaction">
    <interactant intactId="EBI-3957636">
        <id>Q8IYX7</id>
    </interactant>
    <interactant intactId="EBI-3867333">
        <id>A8MQ03</id>
        <label>CYSRT1</label>
    </interactant>
    <organismsDiffer>false</organismsDiffer>
    <experiments>3</experiments>
</comment>
<comment type="interaction">
    <interactant intactId="EBI-3957636">
        <id>Q8IYX7</id>
    </interactant>
    <interactant intactId="EBI-744506">
        <id>Q86V42</id>
        <label>FAM124A</label>
    </interactant>
    <organismsDiffer>false</organismsDiffer>
    <experiments>3</experiments>
</comment>
<comment type="interaction">
    <interactant intactId="EBI-3957636">
        <id>Q8IYX7</id>
    </interactant>
    <interactant intactId="EBI-2510157">
        <id>Q96EF6</id>
        <label>FBXO17</label>
    </interactant>
    <organismsDiffer>false</organismsDiffer>
    <experiments>3</experiments>
</comment>
<comment type="interaction">
    <interactant intactId="EBI-3957636">
        <id>Q8IYX7</id>
    </interactant>
    <interactant intactId="EBI-701903">
        <id>Q14192</id>
        <label>FHL2</label>
    </interactant>
    <organismsDiffer>false</organismsDiffer>
    <experiments>4</experiments>
</comment>
<comment type="interaction">
    <interactant intactId="EBI-3957636">
        <id>Q8IYX7</id>
    </interactant>
    <interactant intactId="EBI-741101">
        <id>Q13643</id>
        <label>FHL3</label>
    </interactant>
    <organismsDiffer>false</organismsDiffer>
    <experiments>9</experiments>
</comment>
<comment type="interaction">
    <interactant intactId="EBI-3957636">
        <id>Q8IYX7</id>
    </interactant>
    <interactant intactId="EBI-750641">
        <id>Q5TD97</id>
        <label>FHL5</label>
    </interactant>
    <organismsDiffer>false</organismsDiffer>
    <experiments>3</experiments>
</comment>
<comment type="interaction">
    <interactant intactId="EBI-3957636">
        <id>Q8IYX7</id>
    </interactant>
    <interactant intactId="EBI-744302">
        <id>P14136</id>
        <label>GFAP</label>
    </interactant>
    <organismsDiffer>false</organismsDiffer>
    <experiments>3</experiments>
</comment>
<comment type="interaction">
    <interactant intactId="EBI-3957636">
        <id>Q8IYX7</id>
    </interactant>
    <interactant intactId="EBI-748515">
        <id>Q8IVS8</id>
        <label>GLYCTK</label>
    </interactant>
    <organismsDiffer>false</organismsDiffer>
    <experiments>3</experiments>
</comment>
<comment type="interaction">
    <interactant intactId="EBI-3957636">
        <id>Q8IYX7</id>
    </interactant>
    <interactant intactId="EBI-5460660">
        <id>Q96MH2</id>
        <label>HEXIM2</label>
    </interactant>
    <organismsDiffer>false</organismsDiffer>
    <experiments>3</experiments>
</comment>
<comment type="interaction">
    <interactant intactId="EBI-3957636">
        <id>Q8IYX7</id>
    </interactant>
    <interactant intactId="EBI-748420">
        <id>Q9NSC5</id>
        <label>HOMER3</label>
    </interactant>
    <organismsDiffer>false</organismsDiffer>
    <experiments>3</experiments>
</comment>
<comment type="interaction">
    <interactant intactId="EBI-3957636">
        <id>Q8IYX7</id>
    </interactant>
    <interactant intactId="EBI-7116203">
        <id>O75031</id>
        <label>HSF2BP</label>
    </interactant>
    <organismsDiffer>false</organismsDiffer>
    <experiments>3</experiments>
</comment>
<comment type="interaction">
    <interactant intactId="EBI-3957636">
        <id>Q8IYX7</id>
    </interactant>
    <interactant intactId="EBI-10220600">
        <id>Q8NA54</id>
        <label>IQUB</label>
    </interactant>
    <organismsDiffer>false</organismsDiffer>
    <experiments>3</experiments>
</comment>
<comment type="interaction">
    <interactant intactId="EBI-3957636">
        <id>Q8IYX7</id>
    </interactant>
    <interactant intactId="EBI-7851314">
        <id>Q2TBA0</id>
        <label>KLHL40</label>
    </interactant>
    <organismsDiffer>false</organismsDiffer>
    <experiments>3</experiments>
</comment>
<comment type="interaction">
    <interactant intactId="EBI-3957636">
        <id>Q8IYX7</id>
    </interactant>
    <interactant intactId="EBI-8639312">
        <id>P25800</id>
        <label>LMO1</label>
    </interactant>
    <organismsDiffer>false</organismsDiffer>
    <experiments>3</experiments>
</comment>
<comment type="interaction">
    <interactant intactId="EBI-3957636">
        <id>Q8IYX7</id>
    </interactant>
    <interactant intactId="EBI-739696">
        <id>P25791</id>
        <label>LMO2</label>
    </interactant>
    <organismsDiffer>false</organismsDiffer>
    <experiments>4</experiments>
</comment>
<comment type="interaction">
    <interactant intactId="EBI-3957636">
        <id>Q8IYX7</id>
    </interactant>
    <interactant intactId="EBI-11959475">
        <id>P25791-3</id>
        <label>LMO2</label>
    </interactant>
    <organismsDiffer>false</organismsDiffer>
    <experiments>3</experiments>
</comment>
<comment type="interaction">
    <interactant intactId="EBI-3957636">
        <id>Q8IYX7</id>
    </interactant>
    <interactant intactId="EBI-713568">
        <id>P45984</id>
        <label>MAPK9</label>
    </interactant>
    <organismsDiffer>false</organismsDiffer>
    <experiments>3</experiments>
</comment>
<comment type="interaction">
    <interactant intactId="EBI-3957636">
        <id>Q8IYX7</id>
    </interactant>
    <interactant intactId="EBI-11750983">
        <id>Q9HC98-4</id>
        <label>NEK6</label>
    </interactant>
    <organismsDiffer>false</organismsDiffer>
    <experiments>3</experiments>
</comment>
<comment type="interaction">
    <interactant intactId="EBI-3957636">
        <id>Q8IYX7</id>
    </interactant>
    <interactant intactId="EBI-10297093">
        <id>Q9BRQ3</id>
        <label>NUDT22</label>
    </interactant>
    <organismsDiffer>false</organismsDiffer>
    <experiments>3</experiments>
</comment>
<comment type="interaction">
    <interactant intactId="EBI-3957636">
        <id>Q8IYX7</id>
    </interactant>
    <interactant intactId="EBI-536879">
        <id>O43482</id>
        <label>OIP5</label>
    </interactant>
    <organismsDiffer>false</organismsDiffer>
    <experiments>3</experiments>
</comment>
<comment type="interaction">
    <interactant intactId="EBI-3957636">
        <id>Q8IYX7</id>
    </interactant>
    <interactant intactId="EBI-9057006">
        <id>Q9UJX0</id>
        <label>OSGIN1</label>
    </interactant>
    <organismsDiffer>false</organismsDiffer>
    <experiments>3</experiments>
</comment>
<comment type="interaction">
    <interactant intactId="EBI-3957636">
        <id>Q8IYX7</id>
    </interactant>
    <interactant intactId="EBI-357275">
        <id>Q99471</id>
        <label>PFDN5</label>
    </interactant>
    <organismsDiffer>false</organismsDiffer>
    <experiments>3</experiments>
</comment>
<comment type="interaction">
    <interactant intactId="EBI-3957636">
        <id>Q8IYX7</id>
    </interactant>
    <interactant intactId="EBI-949255">
        <id>Q58EX7</id>
        <label>PLEKHG4</label>
    </interactant>
    <organismsDiffer>false</organismsDiffer>
    <experiments>3</experiments>
</comment>
<comment type="interaction">
    <interactant intactId="EBI-3957636">
        <id>Q8IYX7</id>
    </interactant>
    <interactant intactId="EBI-11339910">
        <id>Q8IYS1</id>
        <label>PM20D2</label>
    </interactant>
    <organismsDiffer>false</organismsDiffer>
    <experiments>3</experiments>
</comment>
<comment type="interaction">
    <interactant intactId="EBI-3957636">
        <id>Q8IYX7</id>
    </interactant>
    <interactant intactId="EBI-1055079">
        <id>O15160</id>
        <label>POLR1C</label>
    </interactant>
    <organismsDiffer>false</organismsDiffer>
    <experiments>3</experiments>
</comment>
<comment type="interaction">
    <interactant intactId="EBI-3957636">
        <id>Q8IYX7</id>
    </interactant>
    <interactant intactId="EBI-741237">
        <id>O60504</id>
        <label>SORBS3</label>
    </interactant>
    <organismsDiffer>false</organismsDiffer>
    <experiments>3</experiments>
</comment>
<comment type="interaction">
    <interactant intactId="EBI-3957636">
        <id>Q8IYX7</id>
    </interactant>
    <interactant intactId="EBI-749295">
        <id>O75716</id>
        <label>STK16</label>
    </interactant>
    <organismsDiffer>false</organismsDiffer>
    <experiments>6</experiments>
</comment>
<comment type="interaction">
    <interactant intactId="EBI-3957636">
        <id>Q8IYX7</id>
    </interactant>
    <interactant intactId="EBI-11018037">
        <id>Q13470-2</id>
        <label>TNK1</label>
    </interactant>
    <organismsDiffer>false</organismsDiffer>
    <experiments>3</experiments>
</comment>
<comment type="interaction">
    <interactant intactId="EBI-3957636">
        <id>Q8IYX7</id>
    </interactant>
    <interactant intactId="EBI-492476">
        <id>Q96RU7</id>
        <label>TRIB3</label>
    </interactant>
    <organismsDiffer>false</organismsDiffer>
    <experiments>3</experiments>
</comment>
<comment type="interaction">
    <interactant intactId="EBI-3957636">
        <id>Q8IYX7</id>
    </interactant>
    <interactant intactId="EBI-742327">
        <id>Q15654</id>
        <label>TRIP6</label>
    </interactant>
    <organismsDiffer>false</organismsDiffer>
    <experiments>3</experiments>
</comment>
<comment type="interaction">
    <interactant intactId="EBI-3957636">
        <id>Q8IYX7</id>
    </interactant>
    <interactant intactId="EBI-10243107">
        <id>Q548N1</id>
        <label>VPS28</label>
    </interactant>
    <organismsDiffer>false</organismsDiffer>
    <experiments>3</experiments>
</comment>
<comment type="interaction">
    <interactant intactId="EBI-3957636">
        <id>Q8IYX7</id>
    </interactant>
    <interactant intactId="EBI-727424">
        <id>Q9UK41</id>
        <label>VPS28</label>
    </interactant>
    <organismsDiffer>false</organismsDiffer>
    <experiments>3</experiments>
</comment>
<comment type="interaction">
    <interactant intactId="EBI-3957636">
        <id>Q8IYX7</id>
    </interactant>
    <interactant intactId="EBI-12040603">
        <id>Q9NZC7-5</id>
        <label>WWOX</label>
    </interactant>
    <organismsDiffer>false</organismsDiffer>
    <experiments>3</experiments>
</comment>
<comment type="interaction">
    <interactant intactId="EBI-3957636">
        <id>Q8IYX7</id>
    </interactant>
    <interactant intactId="EBI-12030590">
        <id>Q9H0C1</id>
        <label>ZMYND12</label>
    </interactant>
    <organismsDiffer>false</organismsDiffer>
    <experiments>3</experiments>
</comment>
<comment type="interaction">
    <interactant intactId="EBI-3957636">
        <id>Q8IYX7</id>
    </interactant>
    <interactant intactId="EBI-746595">
        <id>Q96E35</id>
        <label>ZMYND19</label>
    </interactant>
    <organismsDiffer>false</organismsDiffer>
    <experiments>6</experiments>
</comment>
<comment type="interaction">
    <interactant intactId="EBI-3957636">
        <id>Q8IYX7</id>
    </interactant>
    <interactant intactId="EBI-3957603">
        <id>P09022</id>
        <label>Hoxa1</label>
    </interactant>
    <organismsDiffer>true</organismsDiffer>
    <experiments>3</experiments>
</comment>
<comment type="subcellular location">
    <subcellularLocation>
        <location evidence="3">Cytoplasm</location>
        <location evidence="3">Cytoskeleton</location>
        <location evidence="3">Microtubule organizing center</location>
        <location evidence="3">Centrosome</location>
        <location evidence="3">Centriole</location>
    </subcellularLocation>
    <subcellularLocation>
        <location evidence="3">Cytoplasm</location>
        <location evidence="3">Cytoskeleton</location>
        <location evidence="3">Cilium basal body</location>
    </subcellularLocation>
    <subcellularLocation>
        <location evidence="3">Cytoplasm</location>
        <location evidence="3">Cytoskeleton</location>
        <location evidence="3">Cilium axoneme</location>
    </subcellularLocation>
    <subcellularLocation>
        <location evidence="3">Cytoplasm</location>
        <location evidence="3">Cytoskeleton</location>
        <location evidence="3">Microtubule organizing center</location>
        <location evidence="3">Centrosome</location>
    </subcellularLocation>
    <subcellularLocation>
        <location evidence="3">Cytoplasm</location>
        <location evidence="3">Cytoskeleton</location>
        <location evidence="3">Flagellum axoneme</location>
    </subcellularLocation>
    <text evidence="3">In multi-ciliated cells, localizes to the basal bodies and in non-ciliated cells, to the centrosome. In spermatozoa, colocalizes with microtubules along the length of the axoneme from its proximal end to its distal tip and with tubulin at the distal end of the flagellum and at the proximal centriole.</text>
</comment>
<comment type="tissue specificity">
    <text evidence="3">Widely expressed, with highest levels in testis. Expressed in mature spermatozoa (at protein level).</text>
</comment>
<comment type="developmental stage">
    <text evidence="3">In retinal pigment epithelium (RPE1) cell line, after 24 hours of serum starvation to stimulate primary cilium production, present at the mother and daughter basal bodies. At early time points of ciliogenesis, not detected in the axoneme. At later time points, expressed along the axoneme, with increasing levels as maturation of the cilium proceeds.</text>
</comment>
<comment type="domain">
    <text evidence="3">The Mn regions are involved in microtubule-binding and stabilization at low temperature. They are required and sufficient for cilium targeting.</text>
</comment>
<comment type="domain">
    <text evidence="3">The N-terminal region (residues 1-29) might play a role in centriole retention.</text>
</comment>
<comment type="similarity">
    <text evidence="5">Belongs to the FAM154 family.</text>
</comment>
<evidence type="ECO:0000256" key="1">
    <source>
        <dbReference type="SAM" id="MobiDB-lite"/>
    </source>
</evidence>
<evidence type="ECO:0000269" key="2">
    <source>
    </source>
</evidence>
<evidence type="ECO:0000269" key="3">
    <source>
    </source>
</evidence>
<evidence type="ECO:0000303" key="4">
    <source>
    </source>
</evidence>
<evidence type="ECO:0000305" key="5"/>